<comment type="function">
    <text>Calmodulin mediates the control of a large number of enzymes, ion channels and other proteins by Ca(2+). Among the enzymes to be stimulated by the calmodulin-Ca(2+) complex are a number of protein kinases and phosphatases.</text>
</comment>
<comment type="miscellaneous">
    <text>This protein has four functional calcium-binding sites.</text>
</comment>
<comment type="similarity">
    <text evidence="3">Belongs to the calmodulin family.</text>
</comment>
<dbReference type="PIR" id="A90036">
    <property type="entry name" value="MCJZR"/>
</dbReference>
<dbReference type="SMR" id="P62184"/>
<dbReference type="iPTMnet" id="P62184"/>
<dbReference type="GO" id="GO:0016460">
    <property type="term" value="C:myosin II complex"/>
    <property type="evidence" value="ECO:0007669"/>
    <property type="project" value="TreeGrafter"/>
</dbReference>
<dbReference type="GO" id="GO:0005509">
    <property type="term" value="F:calcium ion binding"/>
    <property type="evidence" value="ECO:0007669"/>
    <property type="project" value="InterPro"/>
</dbReference>
<dbReference type="CDD" id="cd00051">
    <property type="entry name" value="EFh"/>
    <property type="match status" value="2"/>
</dbReference>
<dbReference type="FunFam" id="1.10.238.10:FF:000527">
    <property type="entry name" value="Calmodulin-3"/>
    <property type="match status" value="1"/>
</dbReference>
<dbReference type="Gene3D" id="1.10.238.10">
    <property type="entry name" value="EF-hand"/>
    <property type="match status" value="3"/>
</dbReference>
<dbReference type="InterPro" id="IPR050230">
    <property type="entry name" value="CALM/Myosin/TropC-like"/>
</dbReference>
<dbReference type="InterPro" id="IPR011992">
    <property type="entry name" value="EF-hand-dom_pair"/>
</dbReference>
<dbReference type="InterPro" id="IPR018247">
    <property type="entry name" value="EF_Hand_1_Ca_BS"/>
</dbReference>
<dbReference type="InterPro" id="IPR002048">
    <property type="entry name" value="EF_hand_dom"/>
</dbReference>
<dbReference type="PANTHER" id="PTHR23048:SF0">
    <property type="entry name" value="CALMODULIN LIKE 3"/>
    <property type="match status" value="1"/>
</dbReference>
<dbReference type="PANTHER" id="PTHR23048">
    <property type="entry name" value="MYOSIN LIGHT CHAIN 1, 3"/>
    <property type="match status" value="1"/>
</dbReference>
<dbReference type="Pfam" id="PF13499">
    <property type="entry name" value="EF-hand_7"/>
    <property type="match status" value="2"/>
</dbReference>
<dbReference type="PRINTS" id="PR00450">
    <property type="entry name" value="RECOVERIN"/>
</dbReference>
<dbReference type="SMART" id="SM00054">
    <property type="entry name" value="EFh"/>
    <property type="match status" value="4"/>
</dbReference>
<dbReference type="SUPFAM" id="SSF47473">
    <property type="entry name" value="EF-hand"/>
    <property type="match status" value="1"/>
</dbReference>
<dbReference type="PROSITE" id="PS00018">
    <property type="entry name" value="EF_HAND_1"/>
    <property type="match status" value="4"/>
</dbReference>
<dbReference type="PROSITE" id="PS50222">
    <property type="entry name" value="EF_HAND_2"/>
    <property type="match status" value="4"/>
</dbReference>
<evidence type="ECO:0000255" key="1">
    <source>
        <dbReference type="PROSITE-ProRule" id="PRU00448"/>
    </source>
</evidence>
<evidence type="ECO:0000269" key="2">
    <source>
    </source>
</evidence>
<evidence type="ECO:0000305" key="3"/>
<organism>
    <name type="scientific">Renilla reniformis</name>
    <name type="common">Sea pansy</name>
    <dbReference type="NCBI Taxonomy" id="6136"/>
    <lineage>
        <taxon>Eukaryota</taxon>
        <taxon>Metazoa</taxon>
        <taxon>Cnidaria</taxon>
        <taxon>Anthozoa</taxon>
        <taxon>Octocorallia</taxon>
        <taxon>Scleralcyonacea</taxon>
        <taxon>Pennatuloidea</taxon>
        <taxon>Renillidae</taxon>
        <taxon>Renilla</taxon>
    </lineage>
</organism>
<keyword id="KW-0007">Acetylation</keyword>
<keyword id="KW-0106">Calcium</keyword>
<keyword id="KW-0903">Direct protein sequencing</keyword>
<keyword id="KW-0479">Metal-binding</keyword>
<keyword id="KW-0488">Methylation</keyword>
<keyword id="KW-0677">Repeat</keyword>
<protein>
    <recommendedName>
        <fullName>Calmodulin</fullName>
        <shortName>CaM</shortName>
    </recommendedName>
</protein>
<feature type="initiator methionine" description="Removed" evidence="2">
    <location>
        <position position="1"/>
    </location>
</feature>
<feature type="chain" id="PRO_0000198267" description="Calmodulin">
    <location>
        <begin position="2"/>
        <end position="149"/>
    </location>
</feature>
<feature type="domain" description="EF-hand 1" evidence="1">
    <location>
        <begin position="8"/>
        <end position="43"/>
    </location>
</feature>
<feature type="domain" description="EF-hand 2" evidence="1">
    <location>
        <begin position="44"/>
        <end position="79"/>
    </location>
</feature>
<feature type="domain" description="EF-hand 3" evidence="1">
    <location>
        <begin position="81"/>
        <end position="116"/>
    </location>
</feature>
<feature type="domain" description="EF-hand 4" evidence="1">
    <location>
        <begin position="117"/>
        <end position="149"/>
    </location>
</feature>
<feature type="binding site" evidence="1">
    <location>
        <position position="21"/>
    </location>
    <ligand>
        <name>Ca(2+)</name>
        <dbReference type="ChEBI" id="CHEBI:29108"/>
        <label>1</label>
    </ligand>
</feature>
<feature type="binding site" evidence="1">
    <location>
        <position position="23"/>
    </location>
    <ligand>
        <name>Ca(2+)</name>
        <dbReference type="ChEBI" id="CHEBI:29108"/>
        <label>1</label>
    </ligand>
</feature>
<feature type="binding site" evidence="1">
    <location>
        <position position="25"/>
    </location>
    <ligand>
        <name>Ca(2+)</name>
        <dbReference type="ChEBI" id="CHEBI:29108"/>
        <label>1</label>
    </ligand>
</feature>
<feature type="binding site" evidence="1">
    <location>
        <position position="27"/>
    </location>
    <ligand>
        <name>Ca(2+)</name>
        <dbReference type="ChEBI" id="CHEBI:29108"/>
        <label>1</label>
    </ligand>
</feature>
<feature type="binding site" evidence="1">
    <location>
        <position position="32"/>
    </location>
    <ligand>
        <name>Ca(2+)</name>
        <dbReference type="ChEBI" id="CHEBI:29108"/>
        <label>1</label>
    </ligand>
</feature>
<feature type="binding site" evidence="1">
    <location>
        <position position="57"/>
    </location>
    <ligand>
        <name>Ca(2+)</name>
        <dbReference type="ChEBI" id="CHEBI:29108"/>
        <label>2</label>
    </ligand>
</feature>
<feature type="binding site" evidence="1">
    <location>
        <position position="59"/>
    </location>
    <ligand>
        <name>Ca(2+)</name>
        <dbReference type="ChEBI" id="CHEBI:29108"/>
        <label>2</label>
    </ligand>
</feature>
<feature type="binding site" evidence="1">
    <location>
        <position position="61"/>
    </location>
    <ligand>
        <name>Ca(2+)</name>
        <dbReference type="ChEBI" id="CHEBI:29108"/>
        <label>2</label>
    </ligand>
</feature>
<feature type="binding site" evidence="1">
    <location>
        <position position="63"/>
    </location>
    <ligand>
        <name>Ca(2+)</name>
        <dbReference type="ChEBI" id="CHEBI:29108"/>
        <label>2</label>
    </ligand>
</feature>
<feature type="binding site" evidence="1">
    <location>
        <position position="68"/>
    </location>
    <ligand>
        <name>Ca(2+)</name>
        <dbReference type="ChEBI" id="CHEBI:29108"/>
        <label>2</label>
    </ligand>
</feature>
<feature type="binding site" evidence="1">
    <location>
        <position position="94"/>
    </location>
    <ligand>
        <name>Ca(2+)</name>
        <dbReference type="ChEBI" id="CHEBI:29108"/>
        <label>3</label>
    </ligand>
</feature>
<feature type="binding site" evidence="1">
    <location>
        <position position="96"/>
    </location>
    <ligand>
        <name>Ca(2+)</name>
        <dbReference type="ChEBI" id="CHEBI:29108"/>
        <label>3</label>
    </ligand>
</feature>
<feature type="binding site" evidence="1">
    <location>
        <position position="98"/>
    </location>
    <ligand>
        <name>Ca(2+)</name>
        <dbReference type="ChEBI" id="CHEBI:29108"/>
        <label>3</label>
    </ligand>
</feature>
<feature type="binding site" evidence="1">
    <location>
        <position position="105"/>
    </location>
    <ligand>
        <name>Ca(2+)</name>
        <dbReference type="ChEBI" id="CHEBI:29108"/>
        <label>3</label>
    </ligand>
</feature>
<feature type="binding site" evidence="1">
    <location>
        <position position="130"/>
    </location>
    <ligand>
        <name>Ca(2+)</name>
        <dbReference type="ChEBI" id="CHEBI:29108"/>
        <label>4</label>
    </ligand>
</feature>
<feature type="binding site" evidence="1">
    <location>
        <position position="132"/>
    </location>
    <ligand>
        <name>Ca(2+)</name>
        <dbReference type="ChEBI" id="CHEBI:29108"/>
        <label>4</label>
    </ligand>
</feature>
<feature type="binding site" evidence="1">
    <location>
        <position position="134"/>
    </location>
    <ligand>
        <name>Ca(2+)</name>
        <dbReference type="ChEBI" id="CHEBI:29108"/>
        <label>4</label>
    </ligand>
</feature>
<feature type="binding site" evidence="1">
    <location>
        <position position="136"/>
    </location>
    <ligand>
        <name>Ca(2+)</name>
        <dbReference type="ChEBI" id="CHEBI:29108"/>
        <label>4</label>
    </ligand>
</feature>
<feature type="binding site" evidence="1">
    <location>
        <position position="141"/>
    </location>
    <ligand>
        <name>Ca(2+)</name>
        <dbReference type="ChEBI" id="CHEBI:29108"/>
        <label>4</label>
    </ligand>
</feature>
<feature type="modified residue" description="N-acetylalanine" evidence="2">
    <location>
        <position position="2"/>
    </location>
</feature>
<feature type="modified residue" description="N6,N6,N6-trimethyllysine" evidence="2">
    <location>
        <position position="116"/>
    </location>
</feature>
<sequence length="149" mass="16840">MADQLTEEQIAEFKEAFSLFDKDGDGTITTKELGTVMRSLGQNPTEAELQDMINEVDADGDGTIDFPEFLTMMARKMKDTDSEEEIREAFRVFDKDGDGFISAAELRHVMTNLGEKLTDEEVDEMIREADIDGDGQVNYEEFVKMMTSK</sequence>
<accession>P62184</accession>
<accession>P02596</accession>
<proteinExistence type="evidence at protein level"/>
<reference key="1">
    <citation type="journal article" date="1980" name="Ann. N. Y. Acad. Sci.">
        <title>Structure and function relationships among calmodulins and troponin C-like proteins from divergent eukaryotic organisms.</title>
        <authorList>
            <person name="Jamieson G.A. Jr."/>
            <person name="Bronson D.D."/>
            <person name="Schachat F.H."/>
            <person name="Vanaman T.C."/>
        </authorList>
    </citation>
    <scope>PROTEIN SEQUENCE OF 2-149</scope>
    <scope>ACETYLATION AT ALA-2</scope>
    <scope>METHYLATION AT LYS-116</scope>
</reference>
<name>CALM_RENRE</name>